<proteinExistence type="evidence at protein level"/>
<gene>
    <name type="primary">Mag</name>
</gene>
<reference key="1">
    <citation type="journal article" date="1987" name="Proc. Natl. Acad. Sci. U.S.A.">
        <title>Two forms of 1B236/myelin-associated glycoprotein, a cell adhesion molecule for postnatal neural development, are produced by alternative splicing.</title>
        <authorList>
            <person name="Lai C."/>
            <person name="Brow M.A."/>
            <person name="Nave K.-A."/>
            <person name="Noronha A.B."/>
            <person name="Quarles R.H."/>
            <person name="Bloom F.E."/>
            <person name="Milner R.J."/>
            <person name="Sutcliffe J.G."/>
        </authorList>
    </citation>
    <scope>NUCLEOTIDE SEQUENCE [MRNA] (ISOFORMS L-MAG AND S-MAG)</scope>
</reference>
<reference key="2">
    <citation type="journal article" date="1987" name="Proc. Natl. Acad. Sci. U.S.A.">
        <title>Molecular cloning and primary structure of myelin-associated glycoprotein.</title>
        <authorList>
            <person name="Arquint M."/>
            <person name="Roder J."/>
            <person name="Chia L.S."/>
            <person name="Down J."/>
            <person name="Wilkinson D."/>
            <person name="Bayley H."/>
            <person name="Braun P."/>
            <person name="Dunn R."/>
        </authorList>
    </citation>
    <scope>NUCLEOTIDE SEQUENCE [MRNA] (ISOFORM L-MAG)</scope>
    <scope>PARTIAL PROTEIN SEQUENCE</scope>
    <scope>TISSUE SPECIFICITY</scope>
</reference>
<reference key="3">
    <citation type="journal article" date="1987" name="J. Cell Biol.">
        <title>The amino acid sequences of the myelin-associated glycoproteins: homology to the immunoglobulin gene superfamily.</title>
        <authorList>
            <person name="Salzer J.L."/>
            <person name="Holmes W.P."/>
            <person name="Colman D.R."/>
        </authorList>
    </citation>
    <scope>NUCLEOTIDE SEQUENCE [MRNA] (ISOFORM L-MAG)</scope>
</reference>
<reference key="4">
    <citation type="submission" date="2007-09" db="UniProtKB">
        <authorList>
            <person name="Lubec G."/>
            <person name="Kang S.U."/>
            <person name="Lubec S."/>
        </authorList>
    </citation>
    <scope>PROTEIN SEQUENCE OF 76-98; 459-477 AND 492-508</scope>
    <scope>IDENTIFICATION BY MASS SPECTROMETRY</scope>
    <source>
        <strain>Sprague-Dawley</strain>
        <tissue>Brain</tissue>
    </source>
</reference>
<reference key="5">
    <citation type="journal article" date="1983" name="Cold Spring Harb. Symp. Quant. Biol.">
        <title>Cellular localization and function of the proteins encoded by brain-specific mRNAs.</title>
        <authorList>
            <person name="Sutcliffe J.G."/>
            <person name="Milner R.J."/>
            <person name="Bloom F.E."/>
        </authorList>
    </citation>
    <scope>NUCLEOTIDE SEQUENCE [MRNA] OF 309-626 (ISOFORM L-MAG)</scope>
</reference>
<reference key="6">
    <citation type="journal article" date="1985" name="J. Neurosci.">
        <title>Immunocytochemical mapping of 1B236, a brain-specific neuronal polypeptide deduced from the sequence of a cloned mRNA.</title>
        <authorList>
            <person name="Bloom F.E."/>
            <person name="Battenberg E.L.F."/>
            <person name="Milner R.J."/>
            <person name="Sutcliffe J.G."/>
        </authorList>
    </citation>
    <scope>NUCLEOTIDE SEQUENCE [MRNA] OF 309-626 (ISOFORM L-MAG)</scope>
    <scope>TISSUE SPECIFICITY</scope>
    <source>
        <tissue>Brain</tissue>
    </source>
</reference>
<reference key="7">
    <citation type="journal article" date="1983" name="Cell">
        <title>Identifying the protein products of brain-specific genes with antibodies to chemically synthesized peptides.</title>
        <authorList>
            <person name="Sutcliffe J.G."/>
            <person name="Milner R.J."/>
            <person name="Shinnick T.M."/>
            <person name="Bloom F.E."/>
        </authorList>
    </citation>
    <scope>NUCLEOTIDE SEQUENCE [MRNA] OF 309-626 (ISOFORM L-MAG)</scope>
</reference>
<reference key="8">
    <citation type="journal article" date="1990" name="J. Cell Biol.">
        <title>The myelin-associated glycoproteins: membrane disposition, evidence of a novel disulfide linkage between immunoglobulin-like domains, and posttranslational palmitylation.</title>
        <authorList>
            <person name="Pedraza L."/>
            <person name="Owens G.C."/>
            <person name="Green L.A.D."/>
            <person name="Salzer J.L."/>
        </authorList>
    </citation>
    <scope>DISULFIDE BONDS</scope>
    <scope>PALMITOYLATION AT CYS-531</scope>
    <scope>PARTIAL PROTEIN SEQUENCE</scope>
</reference>
<reference key="9">
    <citation type="journal article" date="1997" name="J. Biol. Chem.">
        <title>Sialic acid specificity of myelin-associated glycoprotein binding.</title>
        <authorList>
            <person name="Collins B.E."/>
            <person name="Yang L.J."/>
            <person name="Mukhopadhyay G."/>
            <person name="Filbin M.T."/>
            <person name="Kiso M."/>
            <person name="Hasegawa A."/>
            <person name="Schnaar R.L."/>
        </authorList>
    </citation>
    <scope>FUNCTION</scope>
    <scope>SUBCELLULAR LOCATION</scope>
</reference>
<reference key="10">
    <citation type="journal article" date="1997" name="J. Cell Biol.">
        <title>Myelin-associated glycoprotein interacts with neurons via a sialic acid binding site at ARG118 and a distinct neurite inhibition site.</title>
        <authorList>
            <person name="Tang S."/>
            <person name="Shen Y.J."/>
            <person name="DeBellard M.E."/>
            <person name="Mukhopadhyay G."/>
            <person name="Salzer J.L."/>
            <person name="Crocker P.R."/>
            <person name="Filbin M.T."/>
        </authorList>
    </citation>
    <scope>FUNCTION</scope>
    <scope>MUTAGENESIS OF ARG-118</scope>
    <scope>SUBCELLULAR LOCATION</scope>
    <scope>TOPOLOGY</scope>
    <scope>DOMAIN</scope>
</reference>
<reference key="11">
    <citation type="journal article" date="2004" name="Neuron Glia Biol.">
        <title>Myelin associated glycoprotein cross-linking triggers its partitioning into lipid rafts, specific signaling events and cytoskeletal rearrangements in oligodendrocytes.</title>
        <authorList>
            <person name="Marta C.B."/>
            <person name="Taylor C.M."/>
            <person name="Cheng S."/>
            <person name="Quarles R.H."/>
            <person name="Bansal R."/>
            <person name="Pfeiffer S.E."/>
        </authorList>
    </citation>
    <scope>SUBCELLULAR LOCATION</scope>
    <scope>TOPOLOGY</scope>
    <scope>PHOSPHORYLATION</scope>
</reference>
<reference key="12">
    <citation type="journal article" date="2007" name="J. Biol. Chem.">
        <title>Gangliosides and Nogo receptors independently mediate myelin-associated glycoprotein inhibition of neurite outgrowth in different nerve cells.</title>
        <authorList>
            <person name="Mehta N.R."/>
            <person name="Lopez P.H."/>
            <person name="Vyas A.A."/>
            <person name="Schnaar R.L."/>
        </authorList>
    </citation>
    <scope>FUNCTION</scope>
    <scope>TISSUE SPECIFICITY</scope>
</reference>
<reference key="13">
    <citation type="journal article" date="2009" name="J. Neurosci.">
        <title>Axonal protective effects of the myelin-associated glycoprotein.</title>
        <authorList>
            <person name="Nguyen T."/>
            <person name="Mehta N.R."/>
            <person name="Conant K."/>
            <person name="Kim K.J."/>
            <person name="Jones M."/>
            <person name="Calabresi P.A."/>
            <person name="Melli G."/>
            <person name="Hoke A."/>
            <person name="Schnaar R.L."/>
            <person name="Ming G.L."/>
            <person name="Song H."/>
            <person name="Keswani S.C."/>
            <person name="Griffin J.W."/>
        </authorList>
    </citation>
    <scope>FUNCTION</scope>
</reference>
<reference key="14">
    <citation type="journal article" date="2009" name="J. Neurosci.">
        <title>Molecular basis of the interactions of the Nogo-66 receptor and its homolog NgR2 with myelin-associated glycoprotein: development of NgROMNI-Fc, a novel antagonist of CNS myelin inhibition.</title>
        <authorList>
            <person name="Robak L.A."/>
            <person name="Venkatesh K."/>
            <person name="Lee H."/>
            <person name="Raiker S.J."/>
            <person name="Duan Y."/>
            <person name="Lee-Osbourne J."/>
            <person name="Hofer T."/>
            <person name="Mage R.G."/>
            <person name="Rader C."/>
            <person name="Giger R.J."/>
        </authorList>
    </citation>
    <scope>INTERACTION WITH RTN4R AND RTN4RL2</scope>
    <scope>DOMAIN</scope>
</reference>
<reference key="15">
    <citation type="journal article" date="2009" name="PLoS ONE">
        <title>Inhibitory activity of myelin-associated glycoprotein on sensory neurons is largely independent of NgR1 and NgR2 and resides within Ig-Like domains 4 and 5.</title>
        <authorList>
            <person name="Woerter V."/>
            <person name="Schweigreiter R."/>
            <person name="Kinzel B."/>
            <person name="Mueller M."/>
            <person name="Barske C."/>
            <person name="Boeck G."/>
            <person name="Frentzel S."/>
            <person name="Bandtlow C.E."/>
        </authorList>
    </citation>
    <scope>FUNCTION</scope>
    <scope>SUBCELLULAR LOCATION</scope>
    <scope>DOMAIN</scope>
    <scope>MUTAGENESIS OF ARG-118</scope>
</reference>
<reference key="16">
    <citation type="journal article" date="2012" name="Nat. Commun.">
        <title>Quantitative maps of protein phosphorylation sites across 14 different rat organs and tissues.</title>
        <authorList>
            <person name="Lundby A."/>
            <person name="Secher A."/>
            <person name="Lage K."/>
            <person name="Nordsborg N.B."/>
            <person name="Dmytriyev A."/>
            <person name="Lundby C."/>
            <person name="Olsen J.V."/>
        </authorList>
    </citation>
    <scope>PHOSPHORYLATION [LARGE SCALE ANALYSIS] AT SER-545; SER-547 AND SER-549</scope>
    <scope>IDENTIFICATION BY MASS SPECTROMETRY [LARGE SCALE ANALYSIS]</scope>
</reference>
<comment type="function">
    <text evidence="2 7 8 12 13">Adhesion molecule that mediates interactions between myelinating cells and neurons by binding to neuronal sialic acid-containing gangliosides and to the glycoproteins RTN4R and RTN4RL2 (PubMed:8995428, PubMed:9298990). Not required for initial myelination, but seems to play a role in the maintenance of normal axon myelination. Protects motoneurons against apoptosis, also after injury; protection against apoptosis is probably mediated via interaction with neuronal RTN4R and RTN4RL2. Required to prevent degeneration of myelinated axons in adults; this probably depends on binding to gangliosides on the axon cell membrane (By similarity). Negative regulator of neurite outgrowth; in dorsal root ganglion neurons the inhibition is mediated primarily via binding to neuronal RTN4R or RTN4RL2 and to a lesser degree via binding to neuronal gangliosides (PubMed:17640868). In cerebellar granule cells the inhibition is mediated primarily via binding to neuronal gangliosides (PubMed:17640868). In sensory neurons, inhibition of neurite extension depends only partially on RTN4R, RTN4RL2 and gangliosides (PubMed:19367338). Inhibits axon longitudinal growth (PubMed:9298990). Inhibits axon outgrowth by binding to RTN4R (By similarity). Preferentially binds to alpha-2,3-linked sialic acid (PubMed:8995428). Binds ganglioside Gt1b (PubMed:8995428).</text>
</comment>
<comment type="subunit">
    <text evidence="2 9">Monomer and homodimer (By similarity). Interacts (via the first three N-terminal Ig-like domains) with RTN4R and RTN4RL2 (PubMed:19420245). Interacts with isoform 2 of BSG (By similarity).</text>
</comment>
<comment type="subcellular location">
    <subcellularLocation>
        <location evidence="5 8 12 13">Cell membrane</location>
        <topology evidence="5 8 13">Single-pass type I membrane protein</topology>
    </subcellularLocation>
    <subcellularLocation>
        <location evidence="5">Membrane raft</location>
    </subcellularLocation>
</comment>
<comment type="alternative products">
    <event type="alternative splicing"/>
    <isoform>
        <id>P07722-1</id>
        <name>L-MAG</name>
        <sequence type="displayed"/>
    </isoform>
    <isoform>
        <id>P07722-2</id>
        <name>S-MAG</name>
        <sequence type="described" ref="VSP_002529 VSP_002530"/>
    </isoform>
</comment>
<comment type="tissue specificity">
    <text evidence="10 11">Detected in myelin (PubMed:17640868). Detected in olfactory bulb and throughout the brain (at protein level) (PubMed:4020419). Detected in brain (PubMed:2432614).</text>
</comment>
<comment type="domain">
    <text evidence="2">The C-terminal cytoplasmic region found only in isoform L-MAG is required for normal myelination in the central nervous system (CNS), but is apparently not required for normal myelination in the peripheral nervous system (PNS).</text>
</comment>
<comment type="domain">
    <text evidence="2 8 9 13">The extracellular domain is required to protect against axon degeneration (By similarity). The first three Ig-like domains mediate interaction with RTN4R and RTN4RL2, but are not sufficient to inhibit neurite outgrowth (PubMed:19420245). The two C-terminal extracellular Ig-like C2-type domains are required for inhibition of axon longitudinal growth (PubMed:19367338, PubMed:19420245, PubMed:9298990). Besides, the two C-terminal extracellular Ig-like C2-type domains are required for protection against apoptosis after nerve injury (By similarity).</text>
</comment>
<comment type="PTM">
    <text evidence="1">N-glycosylated.</text>
</comment>
<comment type="PTM">
    <text evidence="5">Phosphorylated on tyrosine residues.</text>
</comment>
<comment type="PTM">
    <text evidence="2">Ubiquitinated, leading to proteasomal degradation.</text>
</comment>
<comment type="similarity">
    <text evidence="16">Belongs to the immunoglobulin superfamily. SIGLEC (sialic acid binding Ig-like lectin) family.</text>
</comment>
<evidence type="ECO:0000250" key="1">
    <source>
        <dbReference type="UniProtKB" id="P20916"/>
    </source>
</evidence>
<evidence type="ECO:0000250" key="2">
    <source>
        <dbReference type="UniProtKB" id="P20917"/>
    </source>
</evidence>
<evidence type="ECO:0000255" key="3"/>
<evidence type="ECO:0000256" key="4">
    <source>
        <dbReference type="SAM" id="MobiDB-lite"/>
    </source>
</evidence>
<evidence type="ECO:0000269" key="5">
    <source>
    </source>
</evidence>
<evidence type="ECO:0000269" key="6">
    <source>
    </source>
</evidence>
<evidence type="ECO:0000269" key="7">
    <source>
    </source>
</evidence>
<evidence type="ECO:0000269" key="8">
    <source>
    </source>
</evidence>
<evidence type="ECO:0000269" key="9">
    <source>
    </source>
</evidence>
<evidence type="ECO:0000269" key="10">
    <source>
    </source>
</evidence>
<evidence type="ECO:0000269" key="11">
    <source>
    </source>
</evidence>
<evidence type="ECO:0000269" key="12">
    <source>
    </source>
</evidence>
<evidence type="ECO:0000269" key="13">
    <source>
    </source>
</evidence>
<evidence type="ECO:0000303" key="14">
    <source>
    </source>
</evidence>
<evidence type="ECO:0000303" key="15">
    <source>
    </source>
</evidence>
<evidence type="ECO:0000305" key="16"/>
<evidence type="ECO:0000305" key="17">
    <source>
    </source>
</evidence>
<evidence type="ECO:0007744" key="18">
    <source>
    </source>
</evidence>
<protein>
    <recommendedName>
        <fullName>Myelin-associated glycoprotein</fullName>
    </recommendedName>
    <alternativeName>
        <fullName evidence="14 15">1B236</fullName>
    </alternativeName>
    <alternativeName>
        <fullName>Brain neuron cytoplasmic protein 3</fullName>
    </alternativeName>
    <alternativeName>
        <fullName>Sialic acid-binding Ig-like lectin 4a</fullName>
        <shortName>Siglec-4a</shortName>
    </alternativeName>
</protein>
<keyword id="KW-0025">Alternative splicing</keyword>
<keyword id="KW-0130">Cell adhesion</keyword>
<keyword id="KW-1003">Cell membrane</keyword>
<keyword id="KW-0903">Direct protein sequencing</keyword>
<keyword id="KW-1015">Disulfide bond</keyword>
<keyword id="KW-0325">Glycoprotein</keyword>
<keyword id="KW-0393">Immunoglobulin domain</keyword>
<keyword id="KW-0430">Lectin</keyword>
<keyword id="KW-0446">Lipid-binding</keyword>
<keyword id="KW-0449">Lipoprotein</keyword>
<keyword id="KW-0472">Membrane</keyword>
<keyword id="KW-0564">Palmitate</keyword>
<keyword id="KW-0597">Phosphoprotein</keyword>
<keyword id="KW-1185">Reference proteome</keyword>
<keyword id="KW-0677">Repeat</keyword>
<keyword id="KW-0732">Signal</keyword>
<keyword id="KW-0812">Transmembrane</keyword>
<keyword id="KW-1133">Transmembrane helix</keyword>
<keyword id="KW-0832">Ubl conjugation</keyword>
<dbReference type="EMBL" id="M14871">
    <property type="protein sequence ID" value="AAA41556.1"/>
    <property type="molecule type" value="mRNA"/>
</dbReference>
<dbReference type="EMBL" id="M22357">
    <property type="protein sequence ID" value="AAA41558.1"/>
    <property type="molecule type" value="mRNA"/>
</dbReference>
<dbReference type="EMBL" id="M16800">
    <property type="protein sequence ID" value="AAA41557.1"/>
    <property type="molecule type" value="mRNA"/>
</dbReference>
<dbReference type="EMBL" id="X05301">
    <property type="protein sequence ID" value="CAA28920.1"/>
    <property type="molecule type" value="mRNA"/>
</dbReference>
<dbReference type="EMBL" id="M11721">
    <property type="protein sequence ID" value="AAA42082.1"/>
    <property type="molecule type" value="mRNA"/>
</dbReference>
<dbReference type="EMBL" id="M36702">
    <property type="protein sequence ID" value="AAA40831.1"/>
    <property type="molecule type" value="mRNA"/>
</dbReference>
<dbReference type="EMBL" id="V01544">
    <property type="protein sequence ID" value="CAA24786.1"/>
    <property type="molecule type" value="Genomic_DNA"/>
</dbReference>
<dbReference type="PIR" id="A29028">
    <property type="entry name" value="BNRT3"/>
</dbReference>
<dbReference type="RefSeq" id="NP_058886.1">
    <molecule id="P07722-1"/>
    <property type="nucleotide sequence ID" value="NM_017190.4"/>
</dbReference>
<dbReference type="RefSeq" id="XP_006228886.1">
    <molecule id="P07722-1"/>
    <property type="nucleotide sequence ID" value="XM_006228824.5"/>
</dbReference>
<dbReference type="RefSeq" id="XP_008757360.1">
    <molecule id="P07722-1"/>
    <property type="nucleotide sequence ID" value="XM_008759138.4"/>
</dbReference>
<dbReference type="RefSeq" id="XP_017444540.1">
    <molecule id="P07722-1"/>
    <property type="nucleotide sequence ID" value="XM_017589051.3"/>
</dbReference>
<dbReference type="RefSeq" id="XP_017444541.1">
    <property type="nucleotide sequence ID" value="XM_017589052.1"/>
</dbReference>
<dbReference type="RefSeq" id="XP_017444542.1">
    <property type="nucleotide sequence ID" value="XM_017589053.1"/>
</dbReference>
<dbReference type="SMR" id="P07722"/>
<dbReference type="BioGRID" id="248059">
    <property type="interactions" value="3"/>
</dbReference>
<dbReference type="FunCoup" id="P07722">
    <property type="interactions" value="402"/>
</dbReference>
<dbReference type="IntAct" id="P07722">
    <property type="interactions" value="2"/>
</dbReference>
<dbReference type="MINT" id="P07722"/>
<dbReference type="STRING" id="10116.ENSRNOP00000028544"/>
<dbReference type="GlyCosmos" id="P07722">
    <property type="glycosylation" value="8 sites, No reported glycans"/>
</dbReference>
<dbReference type="GlyGen" id="P07722">
    <property type="glycosylation" value="8 sites"/>
</dbReference>
<dbReference type="iPTMnet" id="P07722"/>
<dbReference type="PhosphoSitePlus" id="P07722"/>
<dbReference type="PaxDb" id="10116-ENSRNOP00000028544"/>
<dbReference type="Ensembl" id="ENSRNOT00000028544.6">
    <molecule id="P07722-1"/>
    <property type="protein sequence ID" value="ENSRNOP00000028544.2"/>
    <property type="gene ID" value="ENSRNOG00000021023.8"/>
</dbReference>
<dbReference type="GeneID" id="29409"/>
<dbReference type="KEGG" id="rno:29409"/>
<dbReference type="UCSC" id="RGD:3035">
    <molecule id="P07722-1"/>
    <property type="organism name" value="rat"/>
</dbReference>
<dbReference type="AGR" id="RGD:3035"/>
<dbReference type="CTD" id="4099"/>
<dbReference type="RGD" id="3035">
    <property type="gene designation" value="Mag"/>
</dbReference>
<dbReference type="eggNOG" id="KOG4475">
    <property type="taxonomic scope" value="Eukaryota"/>
</dbReference>
<dbReference type="GeneTree" id="ENSGT01120000271890"/>
<dbReference type="HOGENOM" id="CLU_020480_1_0_1"/>
<dbReference type="InParanoid" id="P07722"/>
<dbReference type="OMA" id="IIAIVCY"/>
<dbReference type="OrthoDB" id="10012075at2759"/>
<dbReference type="PhylomeDB" id="P07722"/>
<dbReference type="TreeFam" id="TF332441"/>
<dbReference type="Reactome" id="R-RNO-193634">
    <property type="pathway name" value="Axonal growth inhibition (RHOA activation)"/>
</dbReference>
<dbReference type="Reactome" id="R-RNO-210991">
    <property type="pathway name" value="Basigin interactions"/>
</dbReference>
<dbReference type="PRO" id="PR:P07722"/>
<dbReference type="Proteomes" id="UP000002494">
    <property type="component" value="Chromosome 1"/>
</dbReference>
<dbReference type="Bgee" id="ENSRNOG00000021023">
    <property type="expression patterns" value="Expressed in cerebellum and 8 other cell types or tissues"/>
</dbReference>
<dbReference type="ExpressionAtlas" id="P07722">
    <property type="expression patterns" value="baseline and differential"/>
</dbReference>
<dbReference type="GO" id="GO:0043218">
    <property type="term" value="C:compact myelin"/>
    <property type="evidence" value="ECO:0000266"/>
    <property type="project" value="RGD"/>
</dbReference>
<dbReference type="GO" id="GO:0045121">
    <property type="term" value="C:membrane raft"/>
    <property type="evidence" value="ECO:0007669"/>
    <property type="project" value="UniProtKB-SubCell"/>
</dbReference>
<dbReference type="GO" id="GO:0097453">
    <property type="term" value="C:mesaxon"/>
    <property type="evidence" value="ECO:0000314"/>
    <property type="project" value="RGD"/>
</dbReference>
<dbReference type="GO" id="GO:0043209">
    <property type="term" value="C:myelin sheath"/>
    <property type="evidence" value="ECO:0000266"/>
    <property type="project" value="RGD"/>
</dbReference>
<dbReference type="GO" id="GO:0035749">
    <property type="term" value="C:myelin sheath adaxonal region"/>
    <property type="evidence" value="ECO:0000314"/>
    <property type="project" value="RGD"/>
</dbReference>
<dbReference type="GO" id="GO:0033270">
    <property type="term" value="C:paranode region of axon"/>
    <property type="evidence" value="ECO:0000266"/>
    <property type="project" value="RGD"/>
</dbReference>
<dbReference type="GO" id="GO:0005886">
    <property type="term" value="C:plasma membrane"/>
    <property type="evidence" value="ECO:0000315"/>
    <property type="project" value="UniProtKB"/>
</dbReference>
<dbReference type="GO" id="GO:0043220">
    <property type="term" value="C:Schmidt-Lanterman incisure"/>
    <property type="evidence" value="ECO:0000314"/>
    <property type="project" value="RGD"/>
</dbReference>
<dbReference type="GO" id="GO:0030246">
    <property type="term" value="F:carbohydrate binding"/>
    <property type="evidence" value="ECO:0007669"/>
    <property type="project" value="UniProtKB-KW"/>
</dbReference>
<dbReference type="GO" id="GO:1905576">
    <property type="term" value="F:ganglioside GT1b binding"/>
    <property type="evidence" value="ECO:0000314"/>
    <property type="project" value="UniProtKB"/>
</dbReference>
<dbReference type="GO" id="GO:0042803">
    <property type="term" value="F:protein homodimerization activity"/>
    <property type="evidence" value="ECO:0000266"/>
    <property type="project" value="RGD"/>
</dbReference>
<dbReference type="GO" id="GO:0019901">
    <property type="term" value="F:protein kinase binding"/>
    <property type="evidence" value="ECO:0000353"/>
    <property type="project" value="RGD"/>
</dbReference>
<dbReference type="GO" id="GO:0033691">
    <property type="term" value="F:sialic acid binding"/>
    <property type="evidence" value="ECO:0000314"/>
    <property type="project" value="UniProtKB"/>
</dbReference>
<dbReference type="GO" id="GO:0005102">
    <property type="term" value="F:signaling receptor binding"/>
    <property type="evidence" value="ECO:0000353"/>
    <property type="project" value="RGD"/>
</dbReference>
<dbReference type="GO" id="GO:0031103">
    <property type="term" value="P:axon regeneration"/>
    <property type="evidence" value="ECO:0000266"/>
    <property type="project" value="RGD"/>
</dbReference>
<dbReference type="GO" id="GO:0007155">
    <property type="term" value="P:cell adhesion"/>
    <property type="evidence" value="ECO:0000314"/>
    <property type="project" value="UniProtKB"/>
</dbReference>
<dbReference type="GO" id="GO:0098742">
    <property type="term" value="P:cell-cell adhesion via plasma-membrane adhesion molecules"/>
    <property type="evidence" value="ECO:0000315"/>
    <property type="project" value="UniProtKB"/>
</dbReference>
<dbReference type="GO" id="GO:0071260">
    <property type="term" value="P:cellular response to mechanical stimulus"/>
    <property type="evidence" value="ECO:0000270"/>
    <property type="project" value="RGD"/>
</dbReference>
<dbReference type="GO" id="GO:0032289">
    <property type="term" value="P:central nervous system myelin formation"/>
    <property type="evidence" value="ECO:0000266"/>
    <property type="project" value="RGD"/>
</dbReference>
<dbReference type="GO" id="GO:0022010">
    <property type="term" value="P:central nervous system myelination"/>
    <property type="evidence" value="ECO:0000266"/>
    <property type="project" value="RGD"/>
</dbReference>
<dbReference type="GO" id="GO:0042552">
    <property type="term" value="P:myelination"/>
    <property type="evidence" value="ECO:0000266"/>
    <property type="project" value="RGD"/>
</dbReference>
<dbReference type="GO" id="GO:0030517">
    <property type="term" value="P:negative regulation of axon extension"/>
    <property type="evidence" value="ECO:0000315"/>
    <property type="project" value="UniProtKB"/>
</dbReference>
<dbReference type="GO" id="GO:0043524">
    <property type="term" value="P:negative regulation of neuron apoptotic process"/>
    <property type="evidence" value="ECO:0000250"/>
    <property type="project" value="UniProtKB"/>
</dbReference>
<dbReference type="GO" id="GO:0045665">
    <property type="term" value="P:negative regulation of neuron differentiation"/>
    <property type="evidence" value="ECO:0000314"/>
    <property type="project" value="RGD"/>
</dbReference>
<dbReference type="GO" id="GO:0010977">
    <property type="term" value="P:negative regulation of neuron projection development"/>
    <property type="evidence" value="ECO:0000314"/>
    <property type="project" value="RGD"/>
</dbReference>
<dbReference type="GO" id="GO:0007399">
    <property type="term" value="P:nervous system development"/>
    <property type="evidence" value="ECO:0000270"/>
    <property type="project" value="RGD"/>
</dbReference>
<dbReference type="GO" id="GO:0048711">
    <property type="term" value="P:positive regulation of astrocyte differentiation"/>
    <property type="evidence" value="ECO:0000314"/>
    <property type="project" value="RGD"/>
</dbReference>
<dbReference type="GO" id="GO:0031643">
    <property type="term" value="P:positive regulation of myelination"/>
    <property type="evidence" value="ECO:0000266"/>
    <property type="project" value="RGD"/>
</dbReference>
<dbReference type="GO" id="GO:0019226">
    <property type="term" value="P:transmission of nerve impulse"/>
    <property type="evidence" value="ECO:0000266"/>
    <property type="project" value="RGD"/>
</dbReference>
<dbReference type="CDD" id="cd00096">
    <property type="entry name" value="Ig"/>
    <property type="match status" value="1"/>
</dbReference>
<dbReference type="CDD" id="cd20987">
    <property type="entry name" value="IgC2_CD33_d2_like"/>
    <property type="match status" value="1"/>
</dbReference>
<dbReference type="CDD" id="cd05712">
    <property type="entry name" value="IgV_CD33"/>
    <property type="match status" value="1"/>
</dbReference>
<dbReference type="FunFam" id="2.60.40.10:FF:000475">
    <property type="entry name" value="myelin-associated glycoprotein isoform X1"/>
    <property type="match status" value="2"/>
</dbReference>
<dbReference type="FunFam" id="2.60.40.10:FF:000663">
    <property type="entry name" value="myelin-associated glycoprotein isoform X1"/>
    <property type="match status" value="1"/>
</dbReference>
<dbReference type="FunFam" id="2.60.40.10:FF:000743">
    <property type="entry name" value="myelin-associated glycoprotein isoform X1"/>
    <property type="match status" value="1"/>
</dbReference>
<dbReference type="Gene3D" id="2.60.40.10">
    <property type="entry name" value="Immunoglobulins"/>
    <property type="match status" value="4"/>
</dbReference>
<dbReference type="InterPro" id="IPR013162">
    <property type="entry name" value="CD80_C2-set"/>
</dbReference>
<dbReference type="InterPro" id="IPR007110">
    <property type="entry name" value="Ig-like_dom"/>
</dbReference>
<dbReference type="InterPro" id="IPR036179">
    <property type="entry name" value="Ig-like_dom_sf"/>
</dbReference>
<dbReference type="InterPro" id="IPR013783">
    <property type="entry name" value="Ig-like_fold"/>
</dbReference>
<dbReference type="InterPro" id="IPR003599">
    <property type="entry name" value="Ig_sub"/>
</dbReference>
<dbReference type="InterPro" id="IPR003598">
    <property type="entry name" value="Ig_sub2"/>
</dbReference>
<dbReference type="InterPro" id="IPR051036">
    <property type="entry name" value="SIGLEC"/>
</dbReference>
<dbReference type="PANTHER" id="PTHR12035:SF107">
    <property type="entry name" value="MYELIN-ASSOCIATED GLYCOPROTEIN"/>
    <property type="match status" value="1"/>
</dbReference>
<dbReference type="PANTHER" id="PTHR12035">
    <property type="entry name" value="SIALIC ACID BINDING IMMUNOGLOBULIN-LIKE LECTIN"/>
    <property type="match status" value="1"/>
</dbReference>
<dbReference type="Pfam" id="PF08205">
    <property type="entry name" value="C2-set_2"/>
    <property type="match status" value="1"/>
</dbReference>
<dbReference type="Pfam" id="PF13927">
    <property type="entry name" value="Ig_3"/>
    <property type="match status" value="2"/>
</dbReference>
<dbReference type="SMART" id="SM00409">
    <property type="entry name" value="IG"/>
    <property type="match status" value="4"/>
</dbReference>
<dbReference type="SMART" id="SM00408">
    <property type="entry name" value="IGc2"/>
    <property type="match status" value="2"/>
</dbReference>
<dbReference type="SUPFAM" id="SSF48726">
    <property type="entry name" value="Immunoglobulin"/>
    <property type="match status" value="4"/>
</dbReference>
<dbReference type="PROSITE" id="PS50835">
    <property type="entry name" value="IG_LIKE"/>
    <property type="match status" value="2"/>
</dbReference>
<organism>
    <name type="scientific">Rattus norvegicus</name>
    <name type="common">Rat</name>
    <dbReference type="NCBI Taxonomy" id="10116"/>
    <lineage>
        <taxon>Eukaryota</taxon>
        <taxon>Metazoa</taxon>
        <taxon>Chordata</taxon>
        <taxon>Craniata</taxon>
        <taxon>Vertebrata</taxon>
        <taxon>Euteleostomi</taxon>
        <taxon>Mammalia</taxon>
        <taxon>Eutheria</taxon>
        <taxon>Euarchontoglires</taxon>
        <taxon>Glires</taxon>
        <taxon>Rodentia</taxon>
        <taxon>Myomorpha</taxon>
        <taxon>Muroidea</taxon>
        <taxon>Muridae</taxon>
        <taxon>Murinae</taxon>
        <taxon>Rattus</taxon>
    </lineage>
</organism>
<name>MAG_RAT</name>
<accession>P07722</accession>
<accession>P02685</accession>
<accession>P07723</accession>
<sequence length="626" mass="69353">MIFLTTLPLFWIMISASRGGHWGAWMPSSISAFEGTCVSIPCRFDFPDELRPAVVHGVWYFNSPYPKNYPPVVFKSRTQVVHESFQGRSRLLGDLGLRNCTLLLSTLSPELGGKYYFRGDLGGYNQYTFSEHSVLDIINTPNIVVPPEVVAGTEVEVSCMVPDNCPELRPELSWLGHEGLGEPTVLGRLREDEGTWVQVSLLHFVPTREANGHRLGCQAAFPNTTLQFEGYASLDVKYPPVIVEMNSSVEAIEGSHVSLLCGADSNPPPLLTWMRDGMVLREAVAESLYLDLEEVTPAEDGIYACLAENAYGQDNRTVELSVMYAPWKPTVNGTVVAVEGETVSILCSTQSNPDPILTIFKEKQILATVIYESQLQLELPAVTPEDDGEYWCVAENQYGQRATAFNLSVEFAPIILLESHCAAARDTVQCLCVVKSNPEPSVAFELPSRNVTVNETEREFVYSERSGLLLTSILTLRGQAQAPPRVICTSRNLYGTQSLELPFQGAHRLMWAKIGPVGAVVAFAILIAIVCYITQTRRKKNVTESPSFSAGDNPHVLYSPEFRISGAPDKYESEKRLGSERRLLGLRGEPPELDLSYSHSDLGKRPTKDSYTLTEELAEYAEIRVK</sequence>
<feature type="signal peptide">
    <location>
        <begin position="1"/>
        <end position="19"/>
    </location>
</feature>
<feature type="chain" id="PRO_0000014858" description="Myelin-associated glycoprotein">
    <location>
        <begin position="20"/>
        <end position="626"/>
    </location>
</feature>
<feature type="topological domain" description="Extracellular" evidence="3">
    <location>
        <begin position="20"/>
        <end position="516"/>
    </location>
</feature>
<feature type="transmembrane region" description="Helical" evidence="3">
    <location>
        <begin position="517"/>
        <end position="536"/>
    </location>
</feature>
<feature type="topological domain" description="Cytoplasmic" evidence="3">
    <location>
        <begin position="537"/>
        <end position="626"/>
    </location>
</feature>
<feature type="domain" description="Ig-like V-type">
    <location>
        <begin position="22"/>
        <end position="120"/>
    </location>
</feature>
<feature type="domain" description="Ig-like C2-type 1">
    <location>
        <begin position="139"/>
        <end position="237"/>
    </location>
</feature>
<feature type="domain" description="Ig-like C2-type 2">
    <location>
        <begin position="241"/>
        <end position="325"/>
    </location>
</feature>
<feature type="domain" description="Ig-like C2-type 3">
    <location>
        <begin position="327"/>
        <end position="412"/>
    </location>
</feature>
<feature type="domain" description="Ig-like C2-type 4">
    <location>
        <begin position="413"/>
        <end position="508"/>
    </location>
</feature>
<feature type="region of interest" description="Interaction with RTN4R and RTN4RL2" evidence="9">
    <location>
        <begin position="20"/>
        <end position="325"/>
    </location>
</feature>
<feature type="region of interest" description="Required for normal axon myelination in the central nervous system" evidence="2">
    <location>
        <begin position="577"/>
        <end position="626"/>
    </location>
</feature>
<feature type="region of interest" description="Disordered" evidence="4">
    <location>
        <begin position="581"/>
        <end position="608"/>
    </location>
</feature>
<feature type="binding site" evidence="2">
    <location>
        <begin position="65"/>
        <end position="67"/>
    </location>
    <ligand>
        <name>a ganglioside GT1b (d18:1(4E))</name>
        <dbReference type="ChEBI" id="CHEBI:78452"/>
    </ligand>
</feature>
<feature type="binding site" evidence="2">
    <location>
        <position position="118"/>
    </location>
    <ligand>
        <name>a ganglioside GT1b (d18:1(4E))</name>
        <dbReference type="ChEBI" id="CHEBI:78452"/>
    </ligand>
</feature>
<feature type="binding site" evidence="2">
    <location>
        <begin position="124"/>
        <end position="128"/>
    </location>
    <ligand>
        <name>a ganglioside GT1b (d18:1(4E))</name>
        <dbReference type="ChEBI" id="CHEBI:78452"/>
    </ligand>
</feature>
<feature type="modified residue" description="Phosphoserine" evidence="18">
    <location>
        <position position="545"/>
    </location>
</feature>
<feature type="modified residue" description="Phosphoserine" evidence="18">
    <location>
        <position position="547"/>
    </location>
</feature>
<feature type="modified residue" description="Phosphoserine" evidence="18">
    <location>
        <position position="549"/>
    </location>
</feature>
<feature type="lipid moiety-binding region" description="S-palmitoyl cysteine" evidence="6">
    <location>
        <position position="531"/>
    </location>
</feature>
<feature type="glycosylation site" description="N-linked (GlcNAc...) asparagine" evidence="3">
    <location>
        <position position="99"/>
    </location>
</feature>
<feature type="glycosylation site" description="N-linked (GlcNAc...) asparagine" evidence="3">
    <location>
        <position position="223"/>
    </location>
</feature>
<feature type="glycosylation site" description="N-linked (GlcNAc...) asparagine" evidence="3">
    <location>
        <position position="246"/>
    </location>
</feature>
<feature type="glycosylation site" description="N-linked (GlcNAc...) asparagine" evidence="3">
    <location>
        <position position="315"/>
    </location>
</feature>
<feature type="glycosylation site" description="N-linked (GlcNAc...) asparagine" evidence="3">
    <location>
        <position position="332"/>
    </location>
</feature>
<feature type="glycosylation site" description="N-linked (GlcNAc...) asparagine" evidence="3">
    <location>
        <position position="406"/>
    </location>
</feature>
<feature type="glycosylation site" description="N-linked (GlcNAc...) asparagine" evidence="3">
    <location>
        <position position="450"/>
    </location>
</feature>
<feature type="glycosylation site" description="N-linked (GlcNAc...) asparagine" evidence="3">
    <location>
        <position position="454"/>
    </location>
</feature>
<feature type="disulfide bond" evidence="17">
    <location>
        <begin position="37"/>
        <end position="165"/>
    </location>
</feature>
<feature type="disulfide bond" evidence="17">
    <location>
        <begin position="42"/>
        <end position="100"/>
    </location>
</feature>
<feature type="disulfide bond" evidence="17">
    <location>
        <begin position="159"/>
        <end position="217"/>
    </location>
</feature>
<feature type="disulfide bond" evidence="17">
    <location>
        <begin position="261"/>
        <end position="305"/>
    </location>
</feature>
<feature type="disulfide bond" evidence="17">
    <location>
        <begin position="347"/>
        <end position="392"/>
    </location>
</feature>
<feature type="disulfide bond" evidence="17">
    <location>
        <begin position="421"/>
        <end position="430"/>
    </location>
</feature>
<feature type="disulfide bond" evidence="17">
    <location>
        <begin position="432"/>
        <end position="488"/>
    </location>
</feature>
<feature type="splice variant" id="VSP_002529" description="In isoform S-MAG." evidence="14">
    <original>EKRLGSERR</original>
    <variation>REVSTRDCH</variation>
    <location>
        <begin position="574"/>
        <end position="582"/>
    </location>
</feature>
<feature type="splice variant" id="VSP_002530" description="In isoform S-MAG." evidence="14">
    <location>
        <begin position="583"/>
        <end position="626"/>
    </location>
</feature>
<feature type="mutagenesis site" description="Abolishes inhibition of neurite outgrowth from CNS neurons." evidence="13">
    <original>R</original>
    <variation>A</variation>
    <variation>D</variation>
    <location>
        <position position="118"/>
    </location>
</feature>
<feature type="mutagenesis site" description="No effect on inhibition of neurite outgrowth from sensory neurons." evidence="8">
    <original>R</original>
    <variation>A</variation>
    <location>
        <position position="118"/>
    </location>
</feature>
<feature type="sequence conflict" description="In Ref. 5, 6 and 7." evidence="16" ref="5 6 7">
    <original>NA</original>
    <variation>KS</variation>
    <location>
        <begin position="309"/>
        <end position="310"/>
    </location>
</feature>